<evidence type="ECO:0000255" key="1"/>
<evidence type="ECO:0000255" key="2">
    <source>
        <dbReference type="PROSITE-ProRule" id="PRU01092"/>
    </source>
</evidence>
<evidence type="ECO:0000256" key="3">
    <source>
        <dbReference type="SAM" id="MobiDB-lite"/>
    </source>
</evidence>
<evidence type="ECO:0000269" key="4">
    <source>
    </source>
</evidence>
<evidence type="ECO:0000269" key="5">
    <source>
    </source>
</evidence>
<evidence type="ECO:0000303" key="6">
    <source>
    </source>
</evidence>
<evidence type="ECO:0000303" key="7">
    <source>
    </source>
</evidence>
<evidence type="ECO:0000305" key="8"/>
<evidence type="ECO:0000305" key="9">
    <source>
    </source>
</evidence>
<gene>
    <name type="primary">yqcG</name>
    <name type="ordered locus">BSU25860</name>
</gene>
<organism>
    <name type="scientific">Bacillus subtilis (strain 168)</name>
    <dbReference type="NCBI Taxonomy" id="224308"/>
    <lineage>
        <taxon>Bacteria</taxon>
        <taxon>Bacillati</taxon>
        <taxon>Bacillota</taxon>
        <taxon>Bacilli</taxon>
        <taxon>Bacillales</taxon>
        <taxon>Bacillaceae</taxon>
        <taxon>Bacillus</taxon>
    </lineage>
</organism>
<feature type="chain" id="PRO_0000049777" description="Toxin YqcG">
    <location>
        <begin position="1"/>
        <end position="531"/>
    </location>
</feature>
<feature type="domain" description="LXG" evidence="2">
    <location>
        <begin position="1"/>
        <end position="235"/>
    </location>
</feature>
<feature type="region of interest" description="Disordered" evidence="3">
    <location>
        <begin position="408"/>
        <end position="430"/>
    </location>
</feature>
<feature type="region of interest" description="Disordered" evidence="3">
    <location>
        <begin position="469"/>
        <end position="531"/>
    </location>
</feature>
<feature type="coiled-coil region" evidence="1">
    <location>
        <begin position="2"/>
        <end position="39"/>
    </location>
</feature>
<feature type="coiled-coil region" evidence="1">
    <location>
        <begin position="139"/>
        <end position="171"/>
    </location>
</feature>
<feature type="compositionally biased region" description="Polar residues" evidence="3">
    <location>
        <begin position="408"/>
        <end position="422"/>
    </location>
</feature>
<feature type="compositionally biased region" description="Basic and acidic residues" evidence="3">
    <location>
        <begin position="469"/>
        <end position="483"/>
    </location>
</feature>
<feature type="compositionally biased region" description="Basic and acidic residues" evidence="3">
    <location>
        <begin position="497"/>
        <end position="509"/>
    </location>
</feature>
<proteinExistence type="evidence at protein level"/>
<comment type="function">
    <text evidence="5">Toxic component of one of 6 LXG toxin-immunity modules in this strain. They promote kin selection, mediate competition in biofilms, and drive spatial segregation of different strains, indicating that LXG toxins may help avoid warfare between strains in biofilms. Mediates intercellular competition during biofilm formation; disruption of the operon disadvantages the bacteria, but overexpression of the cognate immunity protein restores growth in competition with wild-type. Overexpression alone in situ causes growth arrest but not cell lysis, a large decrease in chromosomal DNA content and the production of anucleate cells. No effect is seen on rRNA. Co-overexpression with cognate immunity protein YqcF does not cause growth arrest. The toxic effect is dependent on the epsA and tapA operons which are required for biofilm formation.</text>
</comment>
<comment type="subunit">
    <text evidence="8">Probably interacts with cognate immunity protein YqcF but not with non-cognate immunity proteins. The interaction inhibits the toxic activity of YqcF (Probable).</text>
</comment>
<comment type="subcellular location">
    <subcellularLocation>
        <location evidence="9">Secreted</location>
    </subcellularLocation>
    <text evidence="5">Delivery to target cells requires the type VII secretion system (T7SS) and YukE.</text>
</comment>
<comment type="induction">
    <text evidence="5">Expressed on rich and minimal solid media likely in early stationary phase; dependent on DegSU. Not expressed in liquid LB, but only under conditions that promote biofilm formation.</text>
</comment>
<comment type="disruption phenotype">
    <text evidence="5">Deletion of the yqcF-yqcG operon has no visible growth phenotype, however it is out-competed by wild-type cells.</text>
</comment>
<comment type="similarity">
    <text evidence="6">In the N-terminal section; belongs to the LXG family.</text>
</comment>
<comment type="caution">
    <text evidence="4">Was originally thought to be an RNase; when the C-terminus (residues 379-531) is expressed in E.coli it has RNase, not DNase activity, and inhibits growth upon expression in E.coli. In vitro RNase activity and in vivo growth inhibition are neutralized by cognate immunity protein YobK, but not by immunity proteins specific to other LXG toxins.</text>
</comment>
<protein>
    <recommendedName>
        <fullName evidence="6">Toxin YqcG</fullName>
    </recommendedName>
    <alternativeName>
        <fullName evidence="7">DNase YqcG</fullName>
    </alternativeName>
</protein>
<sequence length="531" mass="59669">MKVFEAKTLLTEAEKRAQEYKDLKSKMVKLKKAFKAVADLDDSEFSGKGANNIKSFYEDQAGIADQWIDLIEMKISFLTSIPGFLEDANLSDAYIEETFLAHELANAYTKSKSIMSEQKKAMKDILNDINDILPLDLFSTETFKNELSSAEKKRKEAIEKMDEVDQNLTSEYGLSEANEQMIQADYQALMNATAKGKSASPIHYNAKAYRDSEIHKMTEDVKKQSTDYISFKDQQAEQRRIAKEQEELANRPWYEKSWDAVCNFTGEVSGYYDYKRAADGVDPVTGEKLTAGQRVAAGAMAAAGYIPIVGWAGKLAKGGKAVYSTSKALYRADKALDVYKTPKTFHALQNSSKGLYGLASANGFSEAITGRDMFGNKVSKERQEQSLSGAMAMLVPFGARGINKKLNAKSSSRVSEASTNTSKKPKVPKTYKRPTYFRKGVRDKVWENAKDSTGSVKDPLTKQVMKKDEPWDMGHKPGYEFRKHQQSAMERNISRKQFLDEHNNPDHYQPELPSSNRSHKGEDMTDDYFGD</sequence>
<dbReference type="EMBL" id="D32216">
    <property type="protein sequence ID" value="BAA06964.1"/>
    <property type="molecule type" value="Genomic_DNA"/>
</dbReference>
<dbReference type="EMBL" id="D84432">
    <property type="protein sequence ID" value="BAA12428.1"/>
    <property type="molecule type" value="Genomic_DNA"/>
</dbReference>
<dbReference type="EMBL" id="AL009126">
    <property type="protein sequence ID" value="CAB14527.1"/>
    <property type="molecule type" value="Genomic_DNA"/>
</dbReference>
<dbReference type="PIR" id="F69949">
    <property type="entry name" value="F69949"/>
</dbReference>
<dbReference type="RefSeq" id="WP_004399034.1">
    <property type="nucleotide sequence ID" value="NZ_OZ025638.1"/>
</dbReference>
<dbReference type="FunCoup" id="P45942">
    <property type="interactions" value="8"/>
</dbReference>
<dbReference type="STRING" id="224308.BSU25860"/>
<dbReference type="PaxDb" id="224308-BSU25860"/>
<dbReference type="EnsemblBacteria" id="CAB14527">
    <property type="protein sequence ID" value="CAB14527"/>
    <property type="gene ID" value="BSU_25860"/>
</dbReference>
<dbReference type="GeneID" id="937792"/>
<dbReference type="KEGG" id="bsu:BSU25860"/>
<dbReference type="PATRIC" id="fig|224308.179.peg.2810"/>
<dbReference type="eggNOG" id="COG5444">
    <property type="taxonomic scope" value="Bacteria"/>
</dbReference>
<dbReference type="InParanoid" id="P45942"/>
<dbReference type="OrthoDB" id="6636741at2"/>
<dbReference type="BioCyc" id="BSUB:BSU25860-MONOMER"/>
<dbReference type="Proteomes" id="UP000001570">
    <property type="component" value="Chromosome"/>
</dbReference>
<dbReference type="GO" id="GO:0005576">
    <property type="term" value="C:extracellular region"/>
    <property type="evidence" value="ECO:0007669"/>
    <property type="project" value="UniProtKB-SubCell"/>
</dbReference>
<dbReference type="GO" id="GO:0004518">
    <property type="term" value="F:nuclease activity"/>
    <property type="evidence" value="ECO:0007669"/>
    <property type="project" value="UniProtKB-KW"/>
</dbReference>
<dbReference type="GO" id="GO:0090729">
    <property type="term" value="F:toxin activity"/>
    <property type="evidence" value="ECO:0007669"/>
    <property type="project" value="UniProtKB-KW"/>
</dbReference>
<dbReference type="InterPro" id="IPR051768">
    <property type="entry name" value="Bact_secretion_toxin"/>
</dbReference>
<dbReference type="InterPro" id="IPR006829">
    <property type="entry name" value="LXG_dom"/>
</dbReference>
<dbReference type="InterPro" id="IPR027797">
    <property type="entry name" value="PT-TG_dom"/>
</dbReference>
<dbReference type="InterPro" id="IPR026835">
    <property type="entry name" value="YqcG_C"/>
</dbReference>
<dbReference type="PANTHER" id="PTHR34976">
    <property type="entry name" value="RIBONUCLEASE YQCG-RELATED"/>
    <property type="match status" value="1"/>
</dbReference>
<dbReference type="PANTHER" id="PTHR34976:SF2">
    <property type="entry name" value="TYPE VII SECRETION SYSTEM PROTEIN ESSD"/>
    <property type="match status" value="1"/>
</dbReference>
<dbReference type="Pfam" id="PF14410">
    <property type="entry name" value="GH-E"/>
    <property type="match status" value="1"/>
</dbReference>
<dbReference type="Pfam" id="PF04740">
    <property type="entry name" value="LXG"/>
    <property type="match status" value="1"/>
</dbReference>
<dbReference type="Pfam" id="PF14449">
    <property type="entry name" value="PT-TG"/>
    <property type="match status" value="1"/>
</dbReference>
<dbReference type="PROSITE" id="PS51756">
    <property type="entry name" value="LXG"/>
    <property type="match status" value="1"/>
</dbReference>
<accession>P45942</accession>
<keyword id="KW-0175">Coiled coil</keyword>
<keyword id="KW-0378">Hydrolase</keyword>
<keyword id="KW-0540">Nuclease</keyword>
<keyword id="KW-1185">Reference proteome</keyword>
<keyword id="KW-0964">Secreted</keyword>
<keyword id="KW-0800">Toxin</keyword>
<name>YQCG_BACSU</name>
<reference key="1">
    <citation type="journal article" date="1995" name="Microbiology">
        <title>Complete nucleotide sequence of a skin element excised by DNA rearrangement during sporulation in Bacillus subtilis.</title>
        <authorList>
            <person name="Takemaru K."/>
            <person name="Mizuno M."/>
            <person name="Sato T."/>
            <person name="Takeuchi M."/>
            <person name="Kobayashi Y."/>
        </authorList>
    </citation>
    <scope>NUCLEOTIDE SEQUENCE [GENOMIC DNA]</scope>
    <source>
        <strain>168 / JH642</strain>
    </source>
</reference>
<reference key="2">
    <citation type="journal article" date="1996" name="Microbiology">
        <title>Systematic sequencing of the 283 kb 210 degrees-232 degrees region of the Bacillus subtilis genome containing the skin element and many sporulation genes.</title>
        <authorList>
            <person name="Mizuno M."/>
            <person name="Masuda S."/>
            <person name="Takemaru K."/>
            <person name="Hosono S."/>
            <person name="Sato T."/>
            <person name="Takeuchi M."/>
            <person name="Kobayashi Y."/>
        </authorList>
    </citation>
    <scope>NUCLEOTIDE SEQUENCE [GENOMIC DNA]</scope>
    <source>
        <strain>168 / JH642</strain>
    </source>
</reference>
<reference key="3">
    <citation type="journal article" date="1997" name="Nature">
        <title>The complete genome sequence of the Gram-positive bacterium Bacillus subtilis.</title>
        <authorList>
            <person name="Kunst F."/>
            <person name="Ogasawara N."/>
            <person name="Moszer I."/>
            <person name="Albertini A.M."/>
            <person name="Alloni G."/>
            <person name="Azevedo V."/>
            <person name="Bertero M.G."/>
            <person name="Bessieres P."/>
            <person name="Bolotin A."/>
            <person name="Borchert S."/>
            <person name="Borriss R."/>
            <person name="Boursier L."/>
            <person name="Brans A."/>
            <person name="Braun M."/>
            <person name="Brignell S.C."/>
            <person name="Bron S."/>
            <person name="Brouillet S."/>
            <person name="Bruschi C.V."/>
            <person name="Caldwell B."/>
            <person name="Capuano V."/>
            <person name="Carter N.M."/>
            <person name="Choi S.-K."/>
            <person name="Codani J.-J."/>
            <person name="Connerton I.F."/>
            <person name="Cummings N.J."/>
            <person name="Daniel R.A."/>
            <person name="Denizot F."/>
            <person name="Devine K.M."/>
            <person name="Duesterhoeft A."/>
            <person name="Ehrlich S.D."/>
            <person name="Emmerson P.T."/>
            <person name="Entian K.-D."/>
            <person name="Errington J."/>
            <person name="Fabret C."/>
            <person name="Ferrari E."/>
            <person name="Foulger D."/>
            <person name="Fritz C."/>
            <person name="Fujita M."/>
            <person name="Fujita Y."/>
            <person name="Fuma S."/>
            <person name="Galizzi A."/>
            <person name="Galleron N."/>
            <person name="Ghim S.-Y."/>
            <person name="Glaser P."/>
            <person name="Goffeau A."/>
            <person name="Golightly E.J."/>
            <person name="Grandi G."/>
            <person name="Guiseppi G."/>
            <person name="Guy B.J."/>
            <person name="Haga K."/>
            <person name="Haiech J."/>
            <person name="Harwood C.R."/>
            <person name="Henaut A."/>
            <person name="Hilbert H."/>
            <person name="Holsappel S."/>
            <person name="Hosono S."/>
            <person name="Hullo M.-F."/>
            <person name="Itaya M."/>
            <person name="Jones L.-M."/>
            <person name="Joris B."/>
            <person name="Karamata D."/>
            <person name="Kasahara Y."/>
            <person name="Klaerr-Blanchard M."/>
            <person name="Klein C."/>
            <person name="Kobayashi Y."/>
            <person name="Koetter P."/>
            <person name="Koningstein G."/>
            <person name="Krogh S."/>
            <person name="Kumano M."/>
            <person name="Kurita K."/>
            <person name="Lapidus A."/>
            <person name="Lardinois S."/>
            <person name="Lauber J."/>
            <person name="Lazarevic V."/>
            <person name="Lee S.-M."/>
            <person name="Levine A."/>
            <person name="Liu H."/>
            <person name="Masuda S."/>
            <person name="Mauel C."/>
            <person name="Medigue C."/>
            <person name="Medina N."/>
            <person name="Mellado R.P."/>
            <person name="Mizuno M."/>
            <person name="Moestl D."/>
            <person name="Nakai S."/>
            <person name="Noback M."/>
            <person name="Noone D."/>
            <person name="O'Reilly M."/>
            <person name="Ogawa K."/>
            <person name="Ogiwara A."/>
            <person name="Oudega B."/>
            <person name="Park S.-H."/>
            <person name="Parro V."/>
            <person name="Pohl T.M."/>
            <person name="Portetelle D."/>
            <person name="Porwollik S."/>
            <person name="Prescott A.M."/>
            <person name="Presecan E."/>
            <person name="Pujic P."/>
            <person name="Purnelle B."/>
            <person name="Rapoport G."/>
            <person name="Rey M."/>
            <person name="Reynolds S."/>
            <person name="Rieger M."/>
            <person name="Rivolta C."/>
            <person name="Rocha E."/>
            <person name="Roche B."/>
            <person name="Rose M."/>
            <person name="Sadaie Y."/>
            <person name="Sato T."/>
            <person name="Scanlan E."/>
            <person name="Schleich S."/>
            <person name="Schroeter R."/>
            <person name="Scoffone F."/>
            <person name="Sekiguchi J."/>
            <person name="Sekowska A."/>
            <person name="Seror S.J."/>
            <person name="Serror P."/>
            <person name="Shin B.-S."/>
            <person name="Soldo B."/>
            <person name="Sorokin A."/>
            <person name="Tacconi E."/>
            <person name="Takagi T."/>
            <person name="Takahashi H."/>
            <person name="Takemaru K."/>
            <person name="Takeuchi M."/>
            <person name="Tamakoshi A."/>
            <person name="Tanaka T."/>
            <person name="Terpstra P."/>
            <person name="Tognoni A."/>
            <person name="Tosato V."/>
            <person name="Uchiyama S."/>
            <person name="Vandenbol M."/>
            <person name="Vannier F."/>
            <person name="Vassarotti A."/>
            <person name="Viari A."/>
            <person name="Wambutt R."/>
            <person name="Wedler E."/>
            <person name="Wedler H."/>
            <person name="Weitzenegger T."/>
            <person name="Winters P."/>
            <person name="Wipat A."/>
            <person name="Yamamoto H."/>
            <person name="Yamane K."/>
            <person name="Yasumoto K."/>
            <person name="Yata K."/>
            <person name="Yoshida K."/>
            <person name="Yoshikawa H.-F."/>
            <person name="Zumstein E."/>
            <person name="Yoshikawa H."/>
            <person name="Danchin A."/>
        </authorList>
    </citation>
    <scope>NUCLEOTIDE SEQUENCE [LARGE SCALE GENOMIC DNA]</scope>
    <source>
        <strain>168</strain>
    </source>
</reference>
<reference key="4">
    <citation type="journal article" date="1995" name="Gene">
        <title>Analysis of a Bacillus subtilis genome fragment using a co-operative computer system prototype.</title>
        <authorList>
            <person name="Medigue C."/>
            <person name="Moszer I."/>
            <person name="Viari A."/>
            <person name="Danchin A."/>
        </authorList>
    </citation>
    <scope>IDENTIFICATION</scope>
</reference>
<reference key="5">
    <citation type="journal article" date="2012" name="FEBS Lett.">
        <title>A novel family of toxin/antitoxin proteins in Bacillus species.</title>
        <authorList>
            <person name="Holberger L.E."/>
            <person name="Garza-Sanchez F."/>
            <person name="Lamoureux J."/>
            <person name="Low D.A."/>
            <person name="Hayes C.S."/>
        </authorList>
    </citation>
    <scope>INCORRECT FUNCTION AS AN RNASE</scope>
    <scope>FUNCTION AS A TOXIN</scope>
    <scope>EXPRESSION IN E.COLI</scope>
    <source>
        <strain>168</strain>
    </source>
</reference>
<reference key="6">
    <citation type="journal article" date="2021" name="PLoS Genet.">
        <title>Diverse LXG toxin and antitoxin systems specifically mediate intraspecies competition in Bacillus subtilis biofilms.</title>
        <authorList>
            <person name="Kobayashi K."/>
        </authorList>
    </citation>
    <scope>FUNCTION AS A TOXIN</scope>
    <scope>FUNCTION AS A DNASE</scope>
    <scope>SUBCELLULAR LOCATION</scope>
    <scope>INDUCTION</scope>
    <scope>DISRUPTION PHENOTYPE</scope>
    <source>
        <strain>168 / Marburg / ATCC 6051 / DSM 10 / JCM 1465 / NBRC 13719 / NCIMB 3610 / NRRL NRS-744 / VKM B-501</strain>
    </source>
</reference>